<protein>
    <recommendedName>
        <fullName evidence="1">Probable nicotinate-nucleotide adenylyltransferase</fullName>
        <ecNumber evidence="1">2.7.7.18</ecNumber>
    </recommendedName>
    <alternativeName>
        <fullName evidence="1">Deamido-NAD(+) diphosphorylase</fullName>
    </alternativeName>
    <alternativeName>
        <fullName evidence="1">Deamido-NAD(+) pyrophosphorylase</fullName>
    </alternativeName>
    <alternativeName>
        <fullName evidence="1">Nicotinate mononucleotide adenylyltransferase</fullName>
        <shortName evidence="1">NaMN adenylyltransferase</shortName>
    </alternativeName>
</protein>
<dbReference type="EC" id="2.7.7.18" evidence="1"/>
<dbReference type="EMBL" id="AM398681">
    <property type="protein sequence ID" value="CAL42261.1"/>
    <property type="molecule type" value="Genomic_DNA"/>
</dbReference>
<dbReference type="RefSeq" id="WP_011962322.1">
    <property type="nucleotide sequence ID" value="NC_009613.3"/>
</dbReference>
<dbReference type="RefSeq" id="YP_001295081.1">
    <property type="nucleotide sequence ID" value="NC_009613.3"/>
</dbReference>
<dbReference type="SMR" id="A6GVY8"/>
<dbReference type="STRING" id="402612.FP0143"/>
<dbReference type="EnsemblBacteria" id="CAL42261">
    <property type="protein sequence ID" value="CAL42261"/>
    <property type="gene ID" value="FP0143"/>
</dbReference>
<dbReference type="GeneID" id="66553769"/>
<dbReference type="KEGG" id="fps:FP0143"/>
<dbReference type="PATRIC" id="fig|402612.5.peg.151"/>
<dbReference type="eggNOG" id="COG1057">
    <property type="taxonomic scope" value="Bacteria"/>
</dbReference>
<dbReference type="HOGENOM" id="CLU_069765_3_3_10"/>
<dbReference type="OrthoDB" id="5295945at2"/>
<dbReference type="UniPathway" id="UPA00253">
    <property type="reaction ID" value="UER00332"/>
</dbReference>
<dbReference type="Proteomes" id="UP000006394">
    <property type="component" value="Chromosome"/>
</dbReference>
<dbReference type="GO" id="GO:0005524">
    <property type="term" value="F:ATP binding"/>
    <property type="evidence" value="ECO:0007669"/>
    <property type="project" value="UniProtKB-KW"/>
</dbReference>
<dbReference type="GO" id="GO:0004515">
    <property type="term" value="F:nicotinate-nucleotide adenylyltransferase activity"/>
    <property type="evidence" value="ECO:0007669"/>
    <property type="project" value="UniProtKB-UniRule"/>
</dbReference>
<dbReference type="GO" id="GO:0009435">
    <property type="term" value="P:NAD biosynthetic process"/>
    <property type="evidence" value="ECO:0007669"/>
    <property type="project" value="UniProtKB-UniRule"/>
</dbReference>
<dbReference type="CDD" id="cd02165">
    <property type="entry name" value="NMNAT"/>
    <property type="match status" value="1"/>
</dbReference>
<dbReference type="Gene3D" id="3.40.50.620">
    <property type="entry name" value="HUPs"/>
    <property type="match status" value="1"/>
</dbReference>
<dbReference type="HAMAP" id="MF_00244">
    <property type="entry name" value="NaMN_adenylyltr"/>
    <property type="match status" value="1"/>
</dbReference>
<dbReference type="InterPro" id="IPR004821">
    <property type="entry name" value="Cyt_trans-like"/>
</dbReference>
<dbReference type="InterPro" id="IPR005248">
    <property type="entry name" value="NadD/NMNAT"/>
</dbReference>
<dbReference type="InterPro" id="IPR014729">
    <property type="entry name" value="Rossmann-like_a/b/a_fold"/>
</dbReference>
<dbReference type="NCBIfam" id="TIGR00125">
    <property type="entry name" value="cyt_tran_rel"/>
    <property type="match status" value="1"/>
</dbReference>
<dbReference type="NCBIfam" id="TIGR00482">
    <property type="entry name" value="nicotinate (nicotinamide) nucleotide adenylyltransferase"/>
    <property type="match status" value="1"/>
</dbReference>
<dbReference type="PANTHER" id="PTHR39321">
    <property type="entry name" value="NICOTINATE-NUCLEOTIDE ADENYLYLTRANSFERASE-RELATED"/>
    <property type="match status" value="1"/>
</dbReference>
<dbReference type="PANTHER" id="PTHR39321:SF3">
    <property type="entry name" value="PHOSPHOPANTETHEINE ADENYLYLTRANSFERASE"/>
    <property type="match status" value="1"/>
</dbReference>
<dbReference type="Pfam" id="PF01467">
    <property type="entry name" value="CTP_transf_like"/>
    <property type="match status" value="1"/>
</dbReference>
<dbReference type="SUPFAM" id="SSF52374">
    <property type="entry name" value="Nucleotidylyl transferase"/>
    <property type="match status" value="1"/>
</dbReference>
<reference key="1">
    <citation type="journal article" date="2007" name="Nat. Biotechnol.">
        <title>Complete genome sequence of the fish pathogen Flavobacterium psychrophilum.</title>
        <authorList>
            <person name="Duchaud E."/>
            <person name="Boussaha M."/>
            <person name="Loux V."/>
            <person name="Bernardet J.-F."/>
            <person name="Michel C."/>
            <person name="Kerouault B."/>
            <person name="Mondot S."/>
            <person name="Nicolas P."/>
            <person name="Bossy R."/>
            <person name="Caron C."/>
            <person name="Bessieres P."/>
            <person name="Gibrat J.-F."/>
            <person name="Claverol S."/>
            <person name="Dumetz F."/>
            <person name="Le Henaff M."/>
            <person name="Benmansour A."/>
        </authorList>
    </citation>
    <scope>NUCLEOTIDE SEQUENCE [LARGE SCALE GENOMIC DNA]</scope>
    <source>
        <strain>ATCC 49511 / DSM 21280 / CIP 103535 / JIP02/86</strain>
    </source>
</reference>
<gene>
    <name evidence="1" type="primary">nadD</name>
    <name type="ordered locus">FP0143</name>
</gene>
<organism>
    <name type="scientific">Flavobacterium psychrophilum (strain ATCC 49511 / DSM 21280 / CIP 103535 / JIP02/86)</name>
    <dbReference type="NCBI Taxonomy" id="402612"/>
    <lineage>
        <taxon>Bacteria</taxon>
        <taxon>Pseudomonadati</taxon>
        <taxon>Bacteroidota</taxon>
        <taxon>Flavobacteriia</taxon>
        <taxon>Flavobacteriales</taxon>
        <taxon>Flavobacteriaceae</taxon>
        <taxon>Flavobacterium</taxon>
    </lineage>
</organism>
<keyword id="KW-0067">ATP-binding</keyword>
<keyword id="KW-0520">NAD</keyword>
<keyword id="KW-0547">Nucleotide-binding</keyword>
<keyword id="KW-0548">Nucleotidyltransferase</keyword>
<keyword id="KW-0662">Pyridine nucleotide biosynthesis</keyword>
<keyword id="KW-1185">Reference proteome</keyword>
<keyword id="KW-0808">Transferase</keyword>
<proteinExistence type="inferred from homology"/>
<comment type="function">
    <text evidence="1">Catalyzes the reversible adenylation of nicotinate mononucleotide (NaMN) to nicotinic acid adenine dinucleotide (NaAD).</text>
</comment>
<comment type="catalytic activity">
    <reaction evidence="1">
        <text>nicotinate beta-D-ribonucleotide + ATP + H(+) = deamido-NAD(+) + diphosphate</text>
        <dbReference type="Rhea" id="RHEA:22860"/>
        <dbReference type="ChEBI" id="CHEBI:15378"/>
        <dbReference type="ChEBI" id="CHEBI:30616"/>
        <dbReference type="ChEBI" id="CHEBI:33019"/>
        <dbReference type="ChEBI" id="CHEBI:57502"/>
        <dbReference type="ChEBI" id="CHEBI:58437"/>
        <dbReference type="EC" id="2.7.7.18"/>
    </reaction>
</comment>
<comment type="pathway">
    <text evidence="1">Cofactor biosynthesis; NAD(+) biosynthesis; deamido-NAD(+) from nicotinate D-ribonucleotide: step 1/1.</text>
</comment>
<comment type="similarity">
    <text evidence="1">Belongs to the NadD family.</text>
</comment>
<feature type="chain" id="PRO_0000336691" description="Probable nicotinate-nucleotide adenylyltransferase">
    <location>
        <begin position="1"/>
        <end position="193"/>
    </location>
</feature>
<sequence>MKIGLYFGTFNPIHIGHLIIANHMAENSDLDQVWMVVTPHNPLKKKDTLLDDYQRLHLVNLATEDYPKLKPSDIEFKLPQPNYTVNTLAHLQDKFPSYEFSLIMGEDNLNSLHKWKNYEAILQNHQIYVYPRLNTDTIDNQFINHQKIHIIKAPIVEISSTFIRENIKNKKNIQPLLPPKVWKYIDHSNFYKK</sequence>
<evidence type="ECO:0000255" key="1">
    <source>
        <dbReference type="HAMAP-Rule" id="MF_00244"/>
    </source>
</evidence>
<accession>A6GVY8</accession>
<name>NADD_FLAPJ</name>